<feature type="chain" id="PRO_0000294298" description="Malate dehydrogenase">
    <location>
        <begin position="1"/>
        <end position="310"/>
    </location>
</feature>
<feature type="active site" description="Proton acceptor" evidence="1">
    <location>
        <position position="177"/>
    </location>
</feature>
<feature type="binding site" evidence="1">
    <location>
        <begin position="7"/>
        <end position="13"/>
    </location>
    <ligand>
        <name>NAD(+)</name>
        <dbReference type="ChEBI" id="CHEBI:57540"/>
    </ligand>
</feature>
<feature type="binding site" evidence="1">
    <location>
        <position position="34"/>
    </location>
    <ligand>
        <name>NAD(+)</name>
        <dbReference type="ChEBI" id="CHEBI:57540"/>
    </ligand>
</feature>
<feature type="binding site" evidence="1">
    <location>
        <position position="81"/>
    </location>
    <ligand>
        <name>substrate</name>
    </ligand>
</feature>
<feature type="binding site" evidence="1">
    <location>
        <position position="87"/>
    </location>
    <ligand>
        <name>substrate</name>
    </ligand>
</feature>
<feature type="binding site" evidence="1">
    <location>
        <position position="94"/>
    </location>
    <ligand>
        <name>NAD(+)</name>
        <dbReference type="ChEBI" id="CHEBI:57540"/>
    </ligand>
</feature>
<feature type="binding site" evidence="1">
    <location>
        <begin position="117"/>
        <end position="119"/>
    </location>
    <ligand>
        <name>NAD(+)</name>
        <dbReference type="ChEBI" id="CHEBI:57540"/>
    </ligand>
</feature>
<feature type="binding site" evidence="1">
    <location>
        <position position="119"/>
    </location>
    <ligand>
        <name>substrate</name>
    </ligand>
</feature>
<feature type="binding site" evidence="1">
    <location>
        <position position="153"/>
    </location>
    <ligand>
        <name>substrate</name>
    </ligand>
</feature>
<feature type="binding site" evidence="1">
    <location>
        <position position="227"/>
    </location>
    <ligand>
        <name>NAD(+)</name>
        <dbReference type="ChEBI" id="CHEBI:57540"/>
    </ligand>
</feature>
<keyword id="KW-0520">NAD</keyword>
<keyword id="KW-0560">Oxidoreductase</keyword>
<keyword id="KW-1185">Reference proteome</keyword>
<keyword id="KW-0816">Tricarboxylic acid cycle</keyword>
<protein>
    <recommendedName>
        <fullName evidence="1">Malate dehydrogenase</fullName>
        <ecNumber evidence="1">1.1.1.37</ecNumber>
    </recommendedName>
</protein>
<sequence length="310" mass="31920">MKVAVLGAAGGIGQALSLLLKTGLPAGSELSLYDVAPVVPGVAVDLSHIPTAVKVAGFGADALNEALKDADIVLIPAGMPRKPGMDRADLFNVNAGIIKTLAEGIVASCPKALVGIITNPVNGTVPIVAEVFKKAGTYDAKRVFGITTLDVIRSEAFVAELKGVDVATVKVPVIGGHSGTTILPLLSQVEGVSFTDEEVAALTPRIQNAGTEVVNAKAGGGSATLSMGAAAARFCMSLVKGLQGEDVVDYAYVAVENGDAEYFAHPVRLGKNGVEEILSYGELSAFETKAKNDMLETLKKDIKEGVDFMA</sequence>
<dbReference type="EC" id="1.1.1.37" evidence="1"/>
<dbReference type="EMBL" id="CR954246">
    <property type="protein sequence ID" value="CAI87706.1"/>
    <property type="molecule type" value="Genomic_DNA"/>
</dbReference>
<dbReference type="SMR" id="Q3IFH4"/>
<dbReference type="STRING" id="326442.PSHAa2658"/>
<dbReference type="KEGG" id="pha:PSHAa2658"/>
<dbReference type="eggNOG" id="COG0039">
    <property type="taxonomic scope" value="Bacteria"/>
</dbReference>
<dbReference type="HOGENOM" id="CLU_047181_1_0_6"/>
<dbReference type="BioCyc" id="PHAL326442:PSHA_RS13080-MONOMER"/>
<dbReference type="Proteomes" id="UP000006843">
    <property type="component" value="Chromosome I"/>
</dbReference>
<dbReference type="GO" id="GO:0005737">
    <property type="term" value="C:cytoplasm"/>
    <property type="evidence" value="ECO:0007669"/>
    <property type="project" value="TreeGrafter"/>
</dbReference>
<dbReference type="GO" id="GO:0030060">
    <property type="term" value="F:L-malate dehydrogenase (NAD+) activity"/>
    <property type="evidence" value="ECO:0007669"/>
    <property type="project" value="UniProtKB-UniRule"/>
</dbReference>
<dbReference type="GO" id="GO:0006108">
    <property type="term" value="P:malate metabolic process"/>
    <property type="evidence" value="ECO:0007669"/>
    <property type="project" value="InterPro"/>
</dbReference>
<dbReference type="GO" id="GO:0006099">
    <property type="term" value="P:tricarboxylic acid cycle"/>
    <property type="evidence" value="ECO:0007669"/>
    <property type="project" value="UniProtKB-UniRule"/>
</dbReference>
<dbReference type="CDD" id="cd01337">
    <property type="entry name" value="MDH_glyoxysomal_mitochondrial"/>
    <property type="match status" value="1"/>
</dbReference>
<dbReference type="FunFam" id="3.40.50.720:FF:000017">
    <property type="entry name" value="Malate dehydrogenase"/>
    <property type="match status" value="1"/>
</dbReference>
<dbReference type="FunFam" id="3.90.110.10:FF:000001">
    <property type="entry name" value="Malate dehydrogenase"/>
    <property type="match status" value="1"/>
</dbReference>
<dbReference type="Gene3D" id="3.90.110.10">
    <property type="entry name" value="Lactate dehydrogenase/glycoside hydrolase, family 4, C-terminal"/>
    <property type="match status" value="1"/>
</dbReference>
<dbReference type="Gene3D" id="3.40.50.720">
    <property type="entry name" value="NAD(P)-binding Rossmann-like Domain"/>
    <property type="match status" value="1"/>
</dbReference>
<dbReference type="HAMAP" id="MF_01516">
    <property type="entry name" value="Malate_dehydrog_1"/>
    <property type="match status" value="1"/>
</dbReference>
<dbReference type="InterPro" id="IPR001557">
    <property type="entry name" value="L-lactate/malate_DH"/>
</dbReference>
<dbReference type="InterPro" id="IPR022383">
    <property type="entry name" value="Lactate/malate_DH_C"/>
</dbReference>
<dbReference type="InterPro" id="IPR001236">
    <property type="entry name" value="Lactate/malate_DH_N"/>
</dbReference>
<dbReference type="InterPro" id="IPR015955">
    <property type="entry name" value="Lactate_DH/Glyco_Ohase_4_C"/>
</dbReference>
<dbReference type="InterPro" id="IPR001252">
    <property type="entry name" value="Malate_DH_AS"/>
</dbReference>
<dbReference type="InterPro" id="IPR010097">
    <property type="entry name" value="Malate_DH_type1"/>
</dbReference>
<dbReference type="InterPro" id="IPR023958">
    <property type="entry name" value="Malate_DH_type1_bac"/>
</dbReference>
<dbReference type="InterPro" id="IPR036291">
    <property type="entry name" value="NAD(P)-bd_dom_sf"/>
</dbReference>
<dbReference type="NCBIfam" id="TIGR01772">
    <property type="entry name" value="MDH_euk_gproteo"/>
    <property type="match status" value="1"/>
</dbReference>
<dbReference type="PANTHER" id="PTHR11540">
    <property type="entry name" value="MALATE AND LACTATE DEHYDROGENASE"/>
    <property type="match status" value="1"/>
</dbReference>
<dbReference type="PANTHER" id="PTHR11540:SF16">
    <property type="entry name" value="MALATE DEHYDROGENASE, MITOCHONDRIAL"/>
    <property type="match status" value="1"/>
</dbReference>
<dbReference type="Pfam" id="PF02866">
    <property type="entry name" value="Ldh_1_C"/>
    <property type="match status" value="1"/>
</dbReference>
<dbReference type="Pfam" id="PF00056">
    <property type="entry name" value="Ldh_1_N"/>
    <property type="match status" value="1"/>
</dbReference>
<dbReference type="PIRSF" id="PIRSF000102">
    <property type="entry name" value="Lac_mal_DH"/>
    <property type="match status" value="1"/>
</dbReference>
<dbReference type="SUPFAM" id="SSF56327">
    <property type="entry name" value="LDH C-terminal domain-like"/>
    <property type="match status" value="1"/>
</dbReference>
<dbReference type="SUPFAM" id="SSF51735">
    <property type="entry name" value="NAD(P)-binding Rossmann-fold domains"/>
    <property type="match status" value="1"/>
</dbReference>
<dbReference type="PROSITE" id="PS00068">
    <property type="entry name" value="MDH"/>
    <property type="match status" value="1"/>
</dbReference>
<name>MDH_PSET1</name>
<organism>
    <name type="scientific">Pseudoalteromonas translucida (strain TAC 125)</name>
    <dbReference type="NCBI Taxonomy" id="326442"/>
    <lineage>
        <taxon>Bacteria</taxon>
        <taxon>Pseudomonadati</taxon>
        <taxon>Pseudomonadota</taxon>
        <taxon>Gammaproteobacteria</taxon>
        <taxon>Alteromonadales</taxon>
        <taxon>Pseudoalteromonadaceae</taxon>
        <taxon>Pseudoalteromonas</taxon>
    </lineage>
</organism>
<proteinExistence type="inferred from homology"/>
<accession>Q3IFH4</accession>
<gene>
    <name evidence="1" type="primary">mdh</name>
    <name type="ordered locus">PSHAa2658</name>
</gene>
<reference key="1">
    <citation type="journal article" date="2005" name="Genome Res.">
        <title>Coping with cold: the genome of the versatile marine Antarctica bacterium Pseudoalteromonas haloplanktis TAC125.</title>
        <authorList>
            <person name="Medigue C."/>
            <person name="Krin E."/>
            <person name="Pascal G."/>
            <person name="Barbe V."/>
            <person name="Bernsel A."/>
            <person name="Bertin P.N."/>
            <person name="Cheung F."/>
            <person name="Cruveiller S."/>
            <person name="D'Amico S."/>
            <person name="Duilio A."/>
            <person name="Fang G."/>
            <person name="Feller G."/>
            <person name="Ho C."/>
            <person name="Mangenot S."/>
            <person name="Marino G."/>
            <person name="Nilsson J."/>
            <person name="Parrilli E."/>
            <person name="Rocha E.P.C."/>
            <person name="Rouy Z."/>
            <person name="Sekowska A."/>
            <person name="Tutino M.L."/>
            <person name="Vallenet D."/>
            <person name="von Heijne G."/>
            <person name="Danchin A."/>
        </authorList>
    </citation>
    <scope>NUCLEOTIDE SEQUENCE [LARGE SCALE GENOMIC DNA]</scope>
    <source>
        <strain>TAC 125</strain>
    </source>
</reference>
<evidence type="ECO:0000255" key="1">
    <source>
        <dbReference type="HAMAP-Rule" id="MF_01516"/>
    </source>
</evidence>
<comment type="function">
    <text evidence="1">Catalyzes the reversible oxidation of malate to oxaloacetate.</text>
</comment>
<comment type="catalytic activity">
    <reaction evidence="1">
        <text>(S)-malate + NAD(+) = oxaloacetate + NADH + H(+)</text>
        <dbReference type="Rhea" id="RHEA:21432"/>
        <dbReference type="ChEBI" id="CHEBI:15378"/>
        <dbReference type="ChEBI" id="CHEBI:15589"/>
        <dbReference type="ChEBI" id="CHEBI:16452"/>
        <dbReference type="ChEBI" id="CHEBI:57540"/>
        <dbReference type="ChEBI" id="CHEBI:57945"/>
        <dbReference type="EC" id="1.1.1.37"/>
    </reaction>
</comment>
<comment type="subunit">
    <text evidence="1">Homodimer.</text>
</comment>
<comment type="similarity">
    <text evidence="1">Belongs to the LDH/MDH superfamily. MDH type 1 family.</text>
</comment>